<proteinExistence type="inferred from homology"/>
<organism>
    <name type="scientific">Salmonella choleraesuis (strain SC-B67)</name>
    <dbReference type="NCBI Taxonomy" id="321314"/>
    <lineage>
        <taxon>Bacteria</taxon>
        <taxon>Pseudomonadati</taxon>
        <taxon>Pseudomonadota</taxon>
        <taxon>Gammaproteobacteria</taxon>
        <taxon>Enterobacterales</taxon>
        <taxon>Enterobacteriaceae</taxon>
        <taxon>Salmonella</taxon>
    </lineage>
</organism>
<comment type="function">
    <text evidence="1">Catalyzes the specific phosphorylation of 1,6-anhydro-N-acetylmuramic acid (anhMurNAc) with the simultaneous cleavage of the 1,6-anhydro ring, generating MurNAc-6-P. Is required for the utilization of anhMurNAc either imported from the medium or derived from its own cell wall murein, and thus plays a role in cell wall recycling.</text>
</comment>
<comment type="catalytic activity">
    <reaction evidence="1">
        <text>1,6-anhydro-N-acetyl-beta-muramate + ATP + H2O = N-acetyl-D-muramate 6-phosphate + ADP + H(+)</text>
        <dbReference type="Rhea" id="RHEA:24952"/>
        <dbReference type="ChEBI" id="CHEBI:15377"/>
        <dbReference type="ChEBI" id="CHEBI:15378"/>
        <dbReference type="ChEBI" id="CHEBI:30616"/>
        <dbReference type="ChEBI" id="CHEBI:58690"/>
        <dbReference type="ChEBI" id="CHEBI:58722"/>
        <dbReference type="ChEBI" id="CHEBI:456216"/>
        <dbReference type="EC" id="2.7.1.170"/>
    </reaction>
</comment>
<comment type="pathway">
    <text evidence="1">Amino-sugar metabolism; 1,6-anhydro-N-acetylmuramate degradation.</text>
</comment>
<comment type="pathway">
    <text evidence="1">Cell wall biogenesis; peptidoglycan recycling.</text>
</comment>
<comment type="similarity">
    <text evidence="1">Belongs to the anhydro-N-acetylmuramic acid kinase family.</text>
</comment>
<accession>Q57PJ1</accession>
<sequence length="373" mass="39796">MKSGRFIGVMSGTSLDGVDVVLAAIDETMVAQQASLTWPIPVHLKKGILDICQGQPLTLSQLGQLDTQLGRLFAQAVNALLAQQRLQPRDIVAIGCHGQTVWHEPTGEAPHTLQIGDNNHIVAHTGITVVGDFRRRDIALGGQGAPLVPAFHHALLGHPTEKRMVLNIGGIANLSLLFPGQAVRGYDTGPGNMLMDAWIWRQCAQPYDKDAAWAKEGQVILPLLQKMLRDPYFAASAPKSTGREYFNYGWLERHLTAFPGADARDVQATLAELTAVSIAQQVLLNGGCERLMVCGGGSRNPLVMARLAALLPGIEVSTTDKAGISGDDMEALAFAWLAWRTLAGLPGNLPSVTGATEASVLGAIYPANPITQS</sequence>
<feature type="chain" id="PRO_0000250053" description="Anhydro-N-acetylmuramic acid kinase">
    <location>
        <begin position="1"/>
        <end position="373"/>
    </location>
</feature>
<feature type="binding site" evidence="1">
    <location>
        <begin position="12"/>
        <end position="19"/>
    </location>
    <ligand>
        <name>ATP</name>
        <dbReference type="ChEBI" id="CHEBI:30616"/>
    </ligand>
</feature>
<reference key="1">
    <citation type="journal article" date="2005" name="Nucleic Acids Res.">
        <title>The genome sequence of Salmonella enterica serovar Choleraesuis, a highly invasive and resistant zoonotic pathogen.</title>
        <authorList>
            <person name="Chiu C.-H."/>
            <person name="Tang P."/>
            <person name="Chu C."/>
            <person name="Hu S."/>
            <person name="Bao Q."/>
            <person name="Yu J."/>
            <person name="Chou Y.-Y."/>
            <person name="Wang H.-S."/>
            <person name="Lee Y.-S."/>
        </authorList>
    </citation>
    <scope>NUCLEOTIDE SEQUENCE [LARGE SCALE GENOMIC DNA]</scope>
    <source>
        <strain>SC-B67</strain>
    </source>
</reference>
<evidence type="ECO:0000255" key="1">
    <source>
        <dbReference type="HAMAP-Rule" id="MF_01270"/>
    </source>
</evidence>
<keyword id="KW-0067">ATP-binding</keyword>
<keyword id="KW-0119">Carbohydrate metabolism</keyword>
<keyword id="KW-0418">Kinase</keyword>
<keyword id="KW-0547">Nucleotide-binding</keyword>
<keyword id="KW-0808">Transferase</keyword>
<protein>
    <recommendedName>
        <fullName evidence="1">Anhydro-N-acetylmuramic acid kinase</fullName>
        <ecNumber evidence="1">2.7.1.170</ecNumber>
    </recommendedName>
    <alternativeName>
        <fullName evidence="1">AnhMurNAc kinase</fullName>
    </alternativeName>
</protein>
<gene>
    <name evidence="1" type="primary">anmK</name>
    <name type="ordered locus">SCH_1464</name>
</gene>
<dbReference type="EC" id="2.7.1.170" evidence="1"/>
<dbReference type="EMBL" id="AE017220">
    <property type="protein sequence ID" value="AAX65370.1"/>
    <property type="molecule type" value="Genomic_DNA"/>
</dbReference>
<dbReference type="RefSeq" id="WP_000835021.1">
    <property type="nucleotide sequence ID" value="NC_006905.1"/>
</dbReference>
<dbReference type="SMR" id="Q57PJ1"/>
<dbReference type="KEGG" id="sec:SCH_1464"/>
<dbReference type="HOGENOM" id="CLU_038782_0_0_6"/>
<dbReference type="UniPathway" id="UPA00343"/>
<dbReference type="UniPathway" id="UPA00544"/>
<dbReference type="Proteomes" id="UP000000538">
    <property type="component" value="Chromosome"/>
</dbReference>
<dbReference type="GO" id="GO:0005524">
    <property type="term" value="F:ATP binding"/>
    <property type="evidence" value="ECO:0007669"/>
    <property type="project" value="UniProtKB-UniRule"/>
</dbReference>
<dbReference type="GO" id="GO:0016301">
    <property type="term" value="F:kinase activity"/>
    <property type="evidence" value="ECO:0007669"/>
    <property type="project" value="UniProtKB-KW"/>
</dbReference>
<dbReference type="GO" id="GO:0016773">
    <property type="term" value="F:phosphotransferase activity, alcohol group as acceptor"/>
    <property type="evidence" value="ECO:0007669"/>
    <property type="project" value="UniProtKB-UniRule"/>
</dbReference>
<dbReference type="GO" id="GO:0097175">
    <property type="term" value="P:1,6-anhydro-N-acetyl-beta-muramic acid catabolic process"/>
    <property type="evidence" value="ECO:0007669"/>
    <property type="project" value="UniProtKB-UniRule"/>
</dbReference>
<dbReference type="GO" id="GO:0006040">
    <property type="term" value="P:amino sugar metabolic process"/>
    <property type="evidence" value="ECO:0007669"/>
    <property type="project" value="InterPro"/>
</dbReference>
<dbReference type="GO" id="GO:0009254">
    <property type="term" value="P:peptidoglycan turnover"/>
    <property type="evidence" value="ECO:0007669"/>
    <property type="project" value="UniProtKB-UniRule"/>
</dbReference>
<dbReference type="CDD" id="cd24050">
    <property type="entry name" value="ASKHA_NBD_ANMK"/>
    <property type="match status" value="1"/>
</dbReference>
<dbReference type="Gene3D" id="3.30.420.40">
    <property type="match status" value="2"/>
</dbReference>
<dbReference type="HAMAP" id="MF_01270">
    <property type="entry name" value="AnhMurNAc_kinase"/>
    <property type="match status" value="1"/>
</dbReference>
<dbReference type="InterPro" id="IPR005338">
    <property type="entry name" value="Anhydro_N_Ac-Mur_kinase"/>
</dbReference>
<dbReference type="InterPro" id="IPR043129">
    <property type="entry name" value="ATPase_NBD"/>
</dbReference>
<dbReference type="NCBIfam" id="NF007138">
    <property type="entry name" value="PRK09585.1-1"/>
    <property type="match status" value="1"/>
</dbReference>
<dbReference type="NCBIfam" id="NF007139">
    <property type="entry name" value="PRK09585.1-3"/>
    <property type="match status" value="1"/>
</dbReference>
<dbReference type="NCBIfam" id="NF007148">
    <property type="entry name" value="PRK09585.3-2"/>
    <property type="match status" value="1"/>
</dbReference>
<dbReference type="PANTHER" id="PTHR30605">
    <property type="entry name" value="ANHYDRO-N-ACETYLMURAMIC ACID KINASE"/>
    <property type="match status" value="1"/>
</dbReference>
<dbReference type="PANTHER" id="PTHR30605:SF0">
    <property type="entry name" value="ANHYDRO-N-ACETYLMURAMIC ACID KINASE"/>
    <property type="match status" value="1"/>
</dbReference>
<dbReference type="Pfam" id="PF03702">
    <property type="entry name" value="AnmK"/>
    <property type="match status" value="1"/>
</dbReference>
<dbReference type="SUPFAM" id="SSF53067">
    <property type="entry name" value="Actin-like ATPase domain"/>
    <property type="match status" value="1"/>
</dbReference>
<name>ANMK_SALCH</name>